<organism>
    <name type="scientific">Drosophila melanogaster</name>
    <name type="common">Fruit fly</name>
    <dbReference type="NCBI Taxonomy" id="7227"/>
    <lineage>
        <taxon>Eukaryota</taxon>
        <taxon>Metazoa</taxon>
        <taxon>Ecdysozoa</taxon>
        <taxon>Arthropoda</taxon>
        <taxon>Hexapoda</taxon>
        <taxon>Insecta</taxon>
        <taxon>Pterygota</taxon>
        <taxon>Neoptera</taxon>
        <taxon>Endopterygota</taxon>
        <taxon>Diptera</taxon>
        <taxon>Brachycera</taxon>
        <taxon>Muscomorpha</taxon>
        <taxon>Ephydroidea</taxon>
        <taxon>Drosophilidae</taxon>
        <taxon>Drosophila</taxon>
        <taxon>Sophophora</taxon>
    </lineage>
</organism>
<proteinExistence type="evidence at protein level"/>
<sequence length="276" mass="31869">MAQFTLYNKHSAPPSSESTRVDCEHVPLCSINDVQLRFLVPDDLTEVRQLCQEWFPIDYPLSWYEDITSSTRFFALAAVYNLAIIGLIVAEIKPYRNVNKEVIANMSDSDELYTRLSGFPMQDKGILPDSMGRSADVGYILSLGVHRSHRRNGIGSLLLDALMNHLTTAERHSVKAIFLHTLTTNQPAIFFYEKRRFTLHSFLPYYYNIRGKGKDGFTYVNYINGGHPPWTLLDHIKHYASMVRHTSSLCAWLAGRVQQVVRWFYHKLLTRFNFIE</sequence>
<name>NAA60_DROME</name>
<reference evidence="12" key="1">
    <citation type="journal article" date="2000" name="Science">
        <title>The genome sequence of Drosophila melanogaster.</title>
        <authorList>
            <person name="Adams M.D."/>
            <person name="Celniker S.E."/>
            <person name="Holt R.A."/>
            <person name="Evans C.A."/>
            <person name="Gocayne J.D."/>
            <person name="Amanatides P.G."/>
            <person name="Scherer S.E."/>
            <person name="Li P.W."/>
            <person name="Hoskins R.A."/>
            <person name="Galle R.F."/>
            <person name="George R.A."/>
            <person name="Lewis S.E."/>
            <person name="Richards S."/>
            <person name="Ashburner M."/>
            <person name="Henderson S.N."/>
            <person name="Sutton G.G."/>
            <person name="Wortman J.R."/>
            <person name="Yandell M.D."/>
            <person name="Zhang Q."/>
            <person name="Chen L.X."/>
            <person name="Brandon R.C."/>
            <person name="Rogers Y.-H.C."/>
            <person name="Blazej R.G."/>
            <person name="Champe M."/>
            <person name="Pfeiffer B.D."/>
            <person name="Wan K.H."/>
            <person name="Doyle C."/>
            <person name="Baxter E.G."/>
            <person name="Helt G."/>
            <person name="Nelson C.R."/>
            <person name="Miklos G.L.G."/>
            <person name="Abril J.F."/>
            <person name="Agbayani A."/>
            <person name="An H.-J."/>
            <person name="Andrews-Pfannkoch C."/>
            <person name="Baldwin D."/>
            <person name="Ballew R.M."/>
            <person name="Basu A."/>
            <person name="Baxendale J."/>
            <person name="Bayraktaroglu L."/>
            <person name="Beasley E.M."/>
            <person name="Beeson K.Y."/>
            <person name="Benos P.V."/>
            <person name="Berman B.P."/>
            <person name="Bhandari D."/>
            <person name="Bolshakov S."/>
            <person name="Borkova D."/>
            <person name="Botchan M.R."/>
            <person name="Bouck J."/>
            <person name="Brokstein P."/>
            <person name="Brottier P."/>
            <person name="Burtis K.C."/>
            <person name="Busam D.A."/>
            <person name="Butler H."/>
            <person name="Cadieu E."/>
            <person name="Center A."/>
            <person name="Chandra I."/>
            <person name="Cherry J.M."/>
            <person name="Cawley S."/>
            <person name="Dahlke C."/>
            <person name="Davenport L.B."/>
            <person name="Davies P."/>
            <person name="de Pablos B."/>
            <person name="Delcher A."/>
            <person name="Deng Z."/>
            <person name="Mays A.D."/>
            <person name="Dew I."/>
            <person name="Dietz S.M."/>
            <person name="Dodson K."/>
            <person name="Doup L.E."/>
            <person name="Downes M."/>
            <person name="Dugan-Rocha S."/>
            <person name="Dunkov B.C."/>
            <person name="Dunn P."/>
            <person name="Durbin K.J."/>
            <person name="Evangelista C.C."/>
            <person name="Ferraz C."/>
            <person name="Ferriera S."/>
            <person name="Fleischmann W."/>
            <person name="Fosler C."/>
            <person name="Gabrielian A.E."/>
            <person name="Garg N.S."/>
            <person name="Gelbart W.M."/>
            <person name="Glasser K."/>
            <person name="Glodek A."/>
            <person name="Gong F."/>
            <person name="Gorrell J.H."/>
            <person name="Gu Z."/>
            <person name="Guan P."/>
            <person name="Harris M."/>
            <person name="Harris N.L."/>
            <person name="Harvey D.A."/>
            <person name="Heiman T.J."/>
            <person name="Hernandez J.R."/>
            <person name="Houck J."/>
            <person name="Hostin D."/>
            <person name="Houston K.A."/>
            <person name="Howland T.J."/>
            <person name="Wei M.-H."/>
            <person name="Ibegwam C."/>
            <person name="Jalali M."/>
            <person name="Kalush F."/>
            <person name="Karpen G.H."/>
            <person name="Ke Z."/>
            <person name="Kennison J.A."/>
            <person name="Ketchum K.A."/>
            <person name="Kimmel B.E."/>
            <person name="Kodira C.D."/>
            <person name="Kraft C.L."/>
            <person name="Kravitz S."/>
            <person name="Kulp D."/>
            <person name="Lai Z."/>
            <person name="Lasko P."/>
            <person name="Lei Y."/>
            <person name="Levitsky A.A."/>
            <person name="Li J.H."/>
            <person name="Li Z."/>
            <person name="Liang Y."/>
            <person name="Lin X."/>
            <person name="Liu X."/>
            <person name="Mattei B."/>
            <person name="McIntosh T.C."/>
            <person name="McLeod M.P."/>
            <person name="McPherson D."/>
            <person name="Merkulov G."/>
            <person name="Milshina N.V."/>
            <person name="Mobarry C."/>
            <person name="Morris J."/>
            <person name="Moshrefi A."/>
            <person name="Mount S.M."/>
            <person name="Moy M."/>
            <person name="Murphy B."/>
            <person name="Murphy L."/>
            <person name="Muzny D.M."/>
            <person name="Nelson D.L."/>
            <person name="Nelson D.R."/>
            <person name="Nelson K.A."/>
            <person name="Nixon K."/>
            <person name="Nusskern D.R."/>
            <person name="Pacleb J.M."/>
            <person name="Palazzolo M."/>
            <person name="Pittman G.S."/>
            <person name="Pan S."/>
            <person name="Pollard J."/>
            <person name="Puri V."/>
            <person name="Reese M.G."/>
            <person name="Reinert K."/>
            <person name="Remington K."/>
            <person name="Saunders R.D.C."/>
            <person name="Scheeler F."/>
            <person name="Shen H."/>
            <person name="Shue B.C."/>
            <person name="Siden-Kiamos I."/>
            <person name="Simpson M."/>
            <person name="Skupski M.P."/>
            <person name="Smith T.J."/>
            <person name="Spier E."/>
            <person name="Spradling A.C."/>
            <person name="Stapleton M."/>
            <person name="Strong R."/>
            <person name="Sun E."/>
            <person name="Svirskas R."/>
            <person name="Tector C."/>
            <person name="Turner R."/>
            <person name="Venter E."/>
            <person name="Wang A.H."/>
            <person name="Wang X."/>
            <person name="Wang Z.-Y."/>
            <person name="Wassarman D.A."/>
            <person name="Weinstock G.M."/>
            <person name="Weissenbach J."/>
            <person name="Williams S.M."/>
            <person name="Woodage T."/>
            <person name="Worley K.C."/>
            <person name="Wu D."/>
            <person name="Yang S."/>
            <person name="Yao Q.A."/>
            <person name="Ye J."/>
            <person name="Yeh R.-F."/>
            <person name="Zaveri J.S."/>
            <person name="Zhan M."/>
            <person name="Zhang G."/>
            <person name="Zhao Q."/>
            <person name="Zheng L."/>
            <person name="Zheng X.H."/>
            <person name="Zhong F.N."/>
            <person name="Zhong W."/>
            <person name="Zhou X."/>
            <person name="Zhu S.C."/>
            <person name="Zhu X."/>
            <person name="Smith H.O."/>
            <person name="Gibbs R.A."/>
            <person name="Myers E.W."/>
            <person name="Rubin G.M."/>
            <person name="Venter J.C."/>
        </authorList>
    </citation>
    <scope>NUCLEOTIDE SEQUENCE [LARGE SCALE GENOMIC DNA]</scope>
    <source>
        <strain>Berkeley</strain>
    </source>
</reference>
<reference evidence="9 12" key="2">
    <citation type="journal article" date="2002" name="Genome Biol.">
        <title>Annotation of the Drosophila melanogaster euchromatic genome: a systematic review.</title>
        <authorList>
            <person name="Misra S."/>
            <person name="Crosby M.A."/>
            <person name="Mungall C.J."/>
            <person name="Matthews B.B."/>
            <person name="Campbell K.S."/>
            <person name="Hradecky P."/>
            <person name="Huang Y."/>
            <person name="Kaminker J.S."/>
            <person name="Millburn G.H."/>
            <person name="Prochnik S.E."/>
            <person name="Smith C.D."/>
            <person name="Tupy J.L."/>
            <person name="Whitfield E.J."/>
            <person name="Bayraktaroglu L."/>
            <person name="Berman B.P."/>
            <person name="Bettencourt B.R."/>
            <person name="Celniker S.E."/>
            <person name="de Grey A.D.N.J."/>
            <person name="Drysdale R.A."/>
            <person name="Harris N.L."/>
            <person name="Richter J."/>
            <person name="Russo S."/>
            <person name="Schroeder A.J."/>
            <person name="Shu S.Q."/>
            <person name="Stapleton M."/>
            <person name="Yamada C."/>
            <person name="Ashburner M."/>
            <person name="Gelbart W.M."/>
            <person name="Rubin G.M."/>
            <person name="Lewis S.E."/>
        </authorList>
    </citation>
    <scope>GENOME REANNOTATION</scope>
    <scope>ALTERNATIVE SPLICING</scope>
    <source>
        <strain>Berkeley</strain>
    </source>
</reference>
<reference evidence="9 11" key="3">
    <citation type="journal article" date="2002" name="Genome Biol.">
        <title>A Drosophila full-length cDNA resource.</title>
        <authorList>
            <person name="Stapleton M."/>
            <person name="Carlson J.W."/>
            <person name="Brokstein P."/>
            <person name="Yu C."/>
            <person name="Champe M."/>
            <person name="George R.A."/>
            <person name="Guarin H."/>
            <person name="Kronmiller B."/>
            <person name="Pacleb J.M."/>
            <person name="Park S."/>
            <person name="Wan K.H."/>
            <person name="Rubin G.M."/>
            <person name="Celniker S.E."/>
        </authorList>
    </citation>
    <scope>NUCLEOTIDE SEQUENCE [LARGE SCALE MRNA] (ISOFORMS A AND B)</scope>
    <source>
        <strain evidence="11">Berkeley</strain>
        <tissue evidence="4">Embryo</tissue>
    </source>
</reference>
<reference key="4">
    <citation type="journal article" date="2011" name="Mol. Cell">
        <title>HAT4, a Golgi apparatus-anchored B-type histone acetyltransferase, acetylates free histone H4 and facilitates chromatin assembly.</title>
        <authorList>
            <person name="Yang X."/>
            <person name="Yu W."/>
            <person name="Shi L."/>
            <person name="Sun L."/>
            <person name="Liang J."/>
            <person name="Yi X."/>
            <person name="Li Q."/>
            <person name="Zhang Y."/>
            <person name="Yang F."/>
            <person name="Han X."/>
            <person name="Zhang D."/>
            <person name="Yang J."/>
            <person name="Yao Z."/>
            <person name="Shang Y."/>
        </authorList>
    </citation>
    <scope>FUNCTION (ISOFORM A)</scope>
    <scope>FUNCTION (ISOFORM B)</scope>
    <scope>CATALYTIC ACTIVITY</scope>
</reference>
<reference evidence="9" key="5">
    <citation type="journal article" date="2011" name="PLoS Genet.">
        <title>NatF contributes to an evolutionary shift in protein N-terminal acetylation and is important for normal chromosome segregation.</title>
        <authorList>
            <person name="Van Damme P."/>
            <person name="Hole K."/>
            <person name="Pimenta-Marques A."/>
            <person name="Helsens K."/>
            <person name="Vandekerckhove J."/>
            <person name="Martinho R.G."/>
            <person name="Gevaert K."/>
            <person name="Arnesen T."/>
        </authorList>
    </citation>
    <scope>FUNCTION</scope>
</reference>
<feature type="chain" id="PRO_0000413363" description="N-alpha-acetyltransferase 60">
    <location>
        <begin position="1"/>
        <end position="276"/>
    </location>
</feature>
<feature type="domain" description="N-acetyltransferase" evidence="2">
    <location>
        <begin position="34"/>
        <end position="239"/>
    </location>
</feature>
<feature type="region of interest" description="Required for homodimerization" evidence="1">
    <location>
        <begin position="204"/>
        <end position="215"/>
    </location>
</feature>
<feature type="active site" evidence="1">
    <location>
        <position position="139"/>
    </location>
</feature>
<feature type="active site" evidence="1">
    <location>
        <position position="180"/>
    </location>
</feature>
<feature type="binding site" evidence="1">
    <location>
        <position position="59"/>
    </location>
    <ligand>
        <name>substrate</name>
    </ligand>
</feature>
<feature type="binding site" evidence="1">
    <location>
        <position position="141"/>
    </location>
    <ligand>
        <name>substrate</name>
    </ligand>
</feature>
<feature type="binding site" evidence="1">
    <location>
        <begin position="143"/>
        <end position="145"/>
    </location>
    <ligand>
        <name>acetyl-CoA</name>
        <dbReference type="ChEBI" id="CHEBI:57288"/>
    </ligand>
</feature>
<feature type="binding site" evidence="1">
    <location>
        <begin position="151"/>
        <end position="156"/>
    </location>
    <ligand>
        <name>acetyl-CoA</name>
        <dbReference type="ChEBI" id="CHEBI:57288"/>
    </ligand>
</feature>
<feature type="binding site" evidence="1">
    <location>
        <position position="185"/>
    </location>
    <ligand>
        <name>acetyl-CoA</name>
        <dbReference type="ChEBI" id="CHEBI:57288"/>
    </ligand>
</feature>
<feature type="binding site" evidence="1">
    <location>
        <begin position="192"/>
        <end position="195"/>
    </location>
    <ligand>
        <name>acetyl-CoA</name>
        <dbReference type="ChEBI" id="CHEBI:57288"/>
    </ligand>
</feature>
<feature type="binding site" evidence="1">
    <location>
        <position position="207"/>
    </location>
    <ligand>
        <name>substrate</name>
    </ligand>
</feature>
<feature type="splice variant" id="VSP_041889" description="In isoform B and isoform C." evidence="6 7">
    <location>
        <begin position="102"/>
        <end position="122"/>
    </location>
</feature>
<feature type="splice variant" id="VSP_041890" description="In isoform C." evidence="6">
    <original>DHIKHYASMVRHTSSLCAWLAGRVQQVVRWFYHKLLTRFNFIE</original>
    <variation>YPFSKYLYALGCIAFLSMISLYFWLPS</variation>
    <location>
        <begin position="234"/>
        <end position="276"/>
    </location>
</feature>
<accession>Q95SX8</accession>
<accession>B7Z0F9</accession>
<accession>Q8IH11</accession>
<accession>Q9VT42</accession>
<comment type="function">
    <text evidence="5">Displays alpha (N-terminal) acetyltransferase activity towards a range of N-terminal sequences including those starting with Met-Lys, Met-Val, Met-Ala and Met-Met. Required for normal chromosomal segregation during anaphase.</text>
</comment>
<comment type="function">
    <molecule>Isoform A</molecule>
    <text evidence="10">Shows histone acetyltransferase activity toward free histones.</text>
</comment>
<comment type="function">
    <molecule>Isoform B</molecule>
    <text evidence="10">Does not show histone acetyltransferase activity toward free histones.</text>
</comment>
<comment type="catalytic activity">
    <reaction evidence="1">
        <text>N-terminal L-methionyl-[transmembrane protein] + acetyl-CoA = N-terminal N(alpha)-acetyl-L-methionyl-[transmembrane protein] + CoA + H(+)</text>
        <dbReference type="Rhea" id="RHEA:50604"/>
        <dbReference type="Rhea" id="RHEA-COMP:12745"/>
        <dbReference type="Rhea" id="RHEA-COMP:12746"/>
        <dbReference type="ChEBI" id="CHEBI:15378"/>
        <dbReference type="ChEBI" id="CHEBI:57287"/>
        <dbReference type="ChEBI" id="CHEBI:57288"/>
        <dbReference type="ChEBI" id="CHEBI:64731"/>
        <dbReference type="ChEBI" id="CHEBI:133414"/>
        <dbReference type="EC" id="2.3.1.259"/>
    </reaction>
</comment>
<comment type="catalytic activity">
    <reaction evidence="10">
        <text>L-lysyl-[protein] + acetyl-CoA = N(6)-acetyl-L-lysyl-[protein] + CoA + H(+)</text>
        <dbReference type="Rhea" id="RHEA:45948"/>
        <dbReference type="Rhea" id="RHEA-COMP:9752"/>
        <dbReference type="Rhea" id="RHEA-COMP:10731"/>
        <dbReference type="ChEBI" id="CHEBI:15378"/>
        <dbReference type="ChEBI" id="CHEBI:29969"/>
        <dbReference type="ChEBI" id="CHEBI:57287"/>
        <dbReference type="ChEBI" id="CHEBI:57288"/>
        <dbReference type="ChEBI" id="CHEBI:61930"/>
        <dbReference type="EC" id="2.3.1.48"/>
    </reaction>
</comment>
<comment type="alternative products">
    <event type="alternative splicing"/>
    <isoform>
        <id>Q95SX8-1</id>
        <name evidence="3">A</name>
        <sequence type="displayed"/>
    </isoform>
    <isoform>
        <id>Q95SX8-2</id>
        <name evidence="3">B</name>
        <sequence type="described" ref="VSP_041889"/>
    </isoform>
    <isoform>
        <id>Q95SX8-3</id>
        <name evidence="3">C</name>
        <sequence type="described" ref="VSP_041889 VSP_041890"/>
    </isoform>
</comment>
<comment type="similarity">
    <text evidence="9">Belongs to the acetyltransferase family. NAA60 subfamily.</text>
</comment>
<dbReference type="EC" id="2.3.1.259" evidence="1"/>
<dbReference type="EC" id="2.3.1.48" evidence="10"/>
<dbReference type="EMBL" id="AE014296">
    <property type="protein sequence ID" value="AAF50213.2"/>
    <property type="molecule type" value="Genomic_DNA"/>
</dbReference>
<dbReference type="EMBL" id="AE014296">
    <property type="protein sequence ID" value="AAS65049.1"/>
    <property type="molecule type" value="Genomic_DNA"/>
</dbReference>
<dbReference type="EMBL" id="AE014296">
    <property type="protein sequence ID" value="ACL83284.1"/>
    <property type="molecule type" value="Genomic_DNA"/>
</dbReference>
<dbReference type="EMBL" id="AY060437">
    <property type="protein sequence ID" value="AAL25476.1"/>
    <property type="molecule type" value="mRNA"/>
</dbReference>
<dbReference type="EMBL" id="BT001491">
    <property type="protein sequence ID" value="AAN71246.1"/>
    <property type="molecule type" value="mRNA"/>
</dbReference>
<dbReference type="RefSeq" id="NP_001137929.1">
    <molecule id="Q95SX8-3"/>
    <property type="nucleotide sequence ID" value="NM_001144457.3"/>
</dbReference>
<dbReference type="RefSeq" id="NP_648353.3">
    <molecule id="Q95SX8-2"/>
    <property type="nucleotide sequence ID" value="NM_140096.5"/>
</dbReference>
<dbReference type="RefSeq" id="NP_996032.1">
    <molecule id="Q95SX8-1"/>
    <property type="nucleotide sequence ID" value="NM_206310.3"/>
</dbReference>
<dbReference type="SMR" id="Q95SX8"/>
<dbReference type="BioGRID" id="64530">
    <property type="interactions" value="1"/>
</dbReference>
<dbReference type="FunCoup" id="Q95SX8">
    <property type="interactions" value="2070"/>
</dbReference>
<dbReference type="IntAct" id="Q95SX8">
    <property type="interactions" value="2"/>
</dbReference>
<dbReference type="STRING" id="7227.FBpp0089006"/>
<dbReference type="PaxDb" id="7227-FBpp0089006"/>
<dbReference type="DNASU" id="39142"/>
<dbReference type="EnsemblMetazoa" id="FBtr0089410">
    <molecule id="Q95SX8-2"/>
    <property type="protein sequence ID" value="FBpp0088430"/>
    <property type="gene ID" value="FBgn0036039"/>
</dbReference>
<dbReference type="EnsemblMetazoa" id="FBtr0089411">
    <molecule id="Q95SX8-1"/>
    <property type="protein sequence ID" value="FBpp0089006"/>
    <property type="gene ID" value="FBgn0036039"/>
</dbReference>
<dbReference type="EnsemblMetazoa" id="FBtr0114566">
    <molecule id="Q95SX8-3"/>
    <property type="protein sequence ID" value="FBpp0113058"/>
    <property type="gene ID" value="FBgn0036039"/>
</dbReference>
<dbReference type="GeneID" id="39142"/>
<dbReference type="KEGG" id="dme:Dmel_CG18177"/>
<dbReference type="UCSC" id="CG18177-RA">
    <molecule id="Q95SX8-1"/>
    <property type="organism name" value="d. melanogaster"/>
</dbReference>
<dbReference type="UCSC" id="CG18177-RB">
    <property type="organism name" value="d. melanogaster"/>
</dbReference>
<dbReference type="AGR" id="FB:FBgn0036039"/>
<dbReference type="CTD" id="79903"/>
<dbReference type="FlyBase" id="FBgn0036039">
    <property type="gene designation" value="Naa60"/>
</dbReference>
<dbReference type="VEuPathDB" id="VectorBase:FBgn0036039"/>
<dbReference type="eggNOG" id="KOG3138">
    <property type="taxonomic scope" value="Eukaryota"/>
</dbReference>
<dbReference type="GeneTree" id="ENSGT00390000008314"/>
<dbReference type="InParanoid" id="Q95SX8"/>
<dbReference type="OMA" id="CWFEEVV"/>
<dbReference type="OrthoDB" id="47017at2759"/>
<dbReference type="PhylomeDB" id="Q95SX8"/>
<dbReference type="SignaLink" id="Q95SX8"/>
<dbReference type="BioGRID-ORCS" id="39142">
    <property type="hits" value="0 hits in 1 CRISPR screen"/>
</dbReference>
<dbReference type="GenomeRNAi" id="39142"/>
<dbReference type="PRO" id="PR:Q95SX8"/>
<dbReference type="Proteomes" id="UP000000803">
    <property type="component" value="Chromosome 3L"/>
</dbReference>
<dbReference type="Bgee" id="FBgn0036039">
    <property type="expression patterns" value="Expressed in visual pigment cell (sensu Nematoda and Protostomia) in testis and 162 other cell types or tissues"/>
</dbReference>
<dbReference type="GO" id="GO:0005737">
    <property type="term" value="C:cytoplasm"/>
    <property type="evidence" value="ECO:0000305"/>
    <property type="project" value="FlyBase"/>
</dbReference>
<dbReference type="GO" id="GO:0000139">
    <property type="term" value="C:Golgi membrane"/>
    <property type="evidence" value="ECO:0000318"/>
    <property type="project" value="GO_Central"/>
</dbReference>
<dbReference type="GO" id="GO:0004402">
    <property type="term" value="F:histone acetyltransferase activity"/>
    <property type="evidence" value="ECO:0000318"/>
    <property type="project" value="GO_Central"/>
</dbReference>
<dbReference type="GO" id="GO:0010485">
    <property type="term" value="F:histone H4 acetyltransferase activity"/>
    <property type="evidence" value="ECO:0000314"/>
    <property type="project" value="UniProtKB"/>
</dbReference>
<dbReference type="GO" id="GO:0120518">
    <property type="term" value="F:protein N-terminal-methionine acetyltransferase activity"/>
    <property type="evidence" value="ECO:0007669"/>
    <property type="project" value="UniProtKB-EC"/>
</dbReference>
<dbReference type="GO" id="GO:0004596">
    <property type="term" value="F:protein-N-terminal amino-acid acetyltransferase activity"/>
    <property type="evidence" value="ECO:0000314"/>
    <property type="project" value="UniProtKB"/>
</dbReference>
<dbReference type="GO" id="GO:0007059">
    <property type="term" value="P:chromosome segregation"/>
    <property type="evidence" value="ECO:0000315"/>
    <property type="project" value="UniProtKB"/>
</dbReference>
<dbReference type="GO" id="GO:0017196">
    <property type="term" value="P:N-terminal peptidyl-methionine acetylation"/>
    <property type="evidence" value="ECO:0000314"/>
    <property type="project" value="UniProtKB"/>
</dbReference>
<dbReference type="CDD" id="cd04301">
    <property type="entry name" value="NAT_SF"/>
    <property type="match status" value="1"/>
</dbReference>
<dbReference type="FunFam" id="3.40.630.30:FF:000092">
    <property type="entry name" value="N-alpha-acetyltransferase 60 isoform X1"/>
    <property type="match status" value="1"/>
</dbReference>
<dbReference type="Gene3D" id="3.40.630.30">
    <property type="match status" value="1"/>
</dbReference>
<dbReference type="InterPro" id="IPR016181">
    <property type="entry name" value="Acyl_CoA_acyltransferase"/>
</dbReference>
<dbReference type="InterPro" id="IPR000182">
    <property type="entry name" value="GNAT_dom"/>
</dbReference>
<dbReference type="InterPro" id="IPR045141">
    <property type="entry name" value="NAA60-like"/>
</dbReference>
<dbReference type="PANTHER" id="PTHR14744">
    <property type="entry name" value="N-ALPHA-ACETYLTRANSFERASE 60"/>
    <property type="match status" value="1"/>
</dbReference>
<dbReference type="PANTHER" id="PTHR14744:SF15">
    <property type="entry name" value="N-ALPHA-ACETYLTRANSFERASE 60"/>
    <property type="match status" value="1"/>
</dbReference>
<dbReference type="Pfam" id="PF00583">
    <property type="entry name" value="Acetyltransf_1"/>
    <property type="match status" value="1"/>
</dbReference>
<dbReference type="SUPFAM" id="SSF55729">
    <property type="entry name" value="Acyl-CoA N-acyltransferases (Nat)"/>
    <property type="match status" value="1"/>
</dbReference>
<dbReference type="PROSITE" id="PS51186">
    <property type="entry name" value="GNAT"/>
    <property type="match status" value="1"/>
</dbReference>
<evidence type="ECO:0000250" key="1">
    <source>
        <dbReference type="UniProtKB" id="Q9H7X0"/>
    </source>
</evidence>
<evidence type="ECO:0000255" key="2">
    <source>
        <dbReference type="PROSITE-ProRule" id="PRU00532"/>
    </source>
</evidence>
<evidence type="ECO:0000269" key="3">
    <source>
    </source>
</evidence>
<evidence type="ECO:0000269" key="4">
    <source>
    </source>
</evidence>
<evidence type="ECO:0000269" key="5">
    <source>
    </source>
</evidence>
<evidence type="ECO:0000303" key="6">
    <source>
    </source>
</evidence>
<evidence type="ECO:0000303" key="7">
    <source>
    </source>
</evidence>
<evidence type="ECO:0000303" key="8">
    <source>
    </source>
</evidence>
<evidence type="ECO:0000305" key="9"/>
<evidence type="ECO:0000305" key="10">
    <source>
    </source>
</evidence>
<evidence type="ECO:0000312" key="11">
    <source>
        <dbReference type="EMBL" id="AAL25476.1"/>
    </source>
</evidence>
<evidence type="ECO:0000312" key="12">
    <source>
        <dbReference type="EMBL" id="AAS65049.1"/>
    </source>
</evidence>
<evidence type="ECO:0000312" key="13">
    <source>
        <dbReference type="FlyBase" id="FBgn0036039"/>
    </source>
</evidence>
<keyword id="KW-0012">Acyltransferase</keyword>
<keyword id="KW-0025">Alternative splicing</keyword>
<keyword id="KW-0156">Chromatin regulator</keyword>
<keyword id="KW-0159">Chromosome partition</keyword>
<keyword id="KW-1185">Reference proteome</keyword>
<keyword id="KW-0808">Transferase</keyword>
<protein>
    <recommendedName>
        <fullName>N-alpha-acetyltransferase 60</fullName>
        <shortName evidence="8">dNaa60</shortName>
        <ecNumber evidence="1">2.3.1.259</ecNumber>
        <ecNumber evidence="10">2.3.1.48</ecNumber>
    </recommendedName>
    <alternativeName>
        <fullName>NatF catalytic subunit</fullName>
    </alternativeName>
</protein>
<gene>
    <name evidence="13" type="primary">Naa60</name>
    <name type="ORF">CG18177</name>
</gene>